<evidence type="ECO:0000255" key="1">
    <source>
        <dbReference type="HAMAP-Rule" id="MF_01337"/>
    </source>
</evidence>
<evidence type="ECO:0000305" key="2"/>
<keyword id="KW-0687">Ribonucleoprotein</keyword>
<keyword id="KW-0689">Ribosomal protein</keyword>
<keyword id="KW-0694">RNA-binding</keyword>
<keyword id="KW-0699">rRNA-binding</keyword>
<proteinExistence type="inferred from homology"/>
<name>RL18_ACIB3</name>
<protein>
    <recommendedName>
        <fullName evidence="1">Large ribosomal subunit protein uL18</fullName>
    </recommendedName>
    <alternativeName>
        <fullName evidence="2">50S ribosomal protein L18</fullName>
    </alternativeName>
</protein>
<accession>B7GW18</accession>
<feature type="chain" id="PRO_1000142604" description="Large ribosomal subunit protein uL18">
    <location>
        <begin position="1"/>
        <end position="116"/>
    </location>
</feature>
<organism>
    <name type="scientific">Acinetobacter baumannii (strain AB307-0294)</name>
    <dbReference type="NCBI Taxonomy" id="557600"/>
    <lineage>
        <taxon>Bacteria</taxon>
        <taxon>Pseudomonadati</taxon>
        <taxon>Pseudomonadota</taxon>
        <taxon>Gammaproteobacteria</taxon>
        <taxon>Moraxellales</taxon>
        <taxon>Moraxellaceae</taxon>
        <taxon>Acinetobacter</taxon>
        <taxon>Acinetobacter calcoaceticus/baumannii complex</taxon>
    </lineage>
</organism>
<gene>
    <name evidence="1" type="primary">rplR</name>
    <name type="ordered locus">ABBFA_000448</name>
</gene>
<reference key="1">
    <citation type="journal article" date="2008" name="J. Bacteriol.">
        <title>Comparative genome sequence analysis of multidrug-resistant Acinetobacter baumannii.</title>
        <authorList>
            <person name="Adams M.D."/>
            <person name="Goglin K."/>
            <person name="Molyneaux N."/>
            <person name="Hujer K.M."/>
            <person name="Lavender H."/>
            <person name="Jamison J.J."/>
            <person name="MacDonald I.J."/>
            <person name="Martin K.M."/>
            <person name="Russo T."/>
            <person name="Campagnari A.A."/>
            <person name="Hujer A.M."/>
            <person name="Bonomo R.A."/>
            <person name="Gill S.R."/>
        </authorList>
    </citation>
    <scope>NUCLEOTIDE SEQUENCE [LARGE SCALE GENOMIC DNA]</scope>
    <source>
        <strain>AB307-0294</strain>
    </source>
</reference>
<dbReference type="EMBL" id="CP001172">
    <property type="protein sequence ID" value="ACJ58700.1"/>
    <property type="molecule type" value="Genomic_DNA"/>
</dbReference>
<dbReference type="RefSeq" id="WP_001003194.1">
    <property type="nucleotide sequence ID" value="NZ_CP001172.1"/>
</dbReference>
<dbReference type="SMR" id="B7GW18"/>
<dbReference type="GeneID" id="92895301"/>
<dbReference type="HOGENOM" id="CLU_098841_0_1_6"/>
<dbReference type="Proteomes" id="UP000006924">
    <property type="component" value="Chromosome"/>
</dbReference>
<dbReference type="GO" id="GO:0022625">
    <property type="term" value="C:cytosolic large ribosomal subunit"/>
    <property type="evidence" value="ECO:0007669"/>
    <property type="project" value="TreeGrafter"/>
</dbReference>
<dbReference type="GO" id="GO:0008097">
    <property type="term" value="F:5S rRNA binding"/>
    <property type="evidence" value="ECO:0007669"/>
    <property type="project" value="TreeGrafter"/>
</dbReference>
<dbReference type="GO" id="GO:0003735">
    <property type="term" value="F:structural constituent of ribosome"/>
    <property type="evidence" value="ECO:0007669"/>
    <property type="project" value="InterPro"/>
</dbReference>
<dbReference type="GO" id="GO:0006412">
    <property type="term" value="P:translation"/>
    <property type="evidence" value="ECO:0007669"/>
    <property type="project" value="UniProtKB-UniRule"/>
</dbReference>
<dbReference type="CDD" id="cd00432">
    <property type="entry name" value="Ribosomal_L18_L5e"/>
    <property type="match status" value="1"/>
</dbReference>
<dbReference type="FunFam" id="3.30.420.100:FF:000001">
    <property type="entry name" value="50S ribosomal protein L18"/>
    <property type="match status" value="1"/>
</dbReference>
<dbReference type="Gene3D" id="3.30.420.100">
    <property type="match status" value="1"/>
</dbReference>
<dbReference type="HAMAP" id="MF_01337_B">
    <property type="entry name" value="Ribosomal_uL18_B"/>
    <property type="match status" value="1"/>
</dbReference>
<dbReference type="InterPro" id="IPR004389">
    <property type="entry name" value="Ribosomal_uL18_bac-type"/>
</dbReference>
<dbReference type="InterPro" id="IPR005484">
    <property type="entry name" value="Ribosomal_uL18_bac/euk"/>
</dbReference>
<dbReference type="NCBIfam" id="TIGR00060">
    <property type="entry name" value="L18_bact"/>
    <property type="match status" value="1"/>
</dbReference>
<dbReference type="PANTHER" id="PTHR12899">
    <property type="entry name" value="39S RIBOSOMAL PROTEIN L18, MITOCHONDRIAL"/>
    <property type="match status" value="1"/>
</dbReference>
<dbReference type="PANTHER" id="PTHR12899:SF3">
    <property type="entry name" value="LARGE RIBOSOMAL SUBUNIT PROTEIN UL18M"/>
    <property type="match status" value="1"/>
</dbReference>
<dbReference type="Pfam" id="PF00861">
    <property type="entry name" value="Ribosomal_L18p"/>
    <property type="match status" value="1"/>
</dbReference>
<dbReference type="SUPFAM" id="SSF53137">
    <property type="entry name" value="Translational machinery components"/>
    <property type="match status" value="1"/>
</dbReference>
<sequence>MNEKKQSRLRRAKSTRLHIRALGATRLCVNRTPRHIYAQVISADGGKVLAQASTLDASLRSGTTGNIEAATKVGALIAERAKAAGVTKVAFDRSGFKYHGRIKALADAAREGGLEF</sequence>
<comment type="function">
    <text evidence="1">This is one of the proteins that bind and probably mediate the attachment of the 5S RNA into the large ribosomal subunit, where it forms part of the central protuberance.</text>
</comment>
<comment type="subunit">
    <text evidence="1">Part of the 50S ribosomal subunit; part of the 5S rRNA/L5/L18/L25 subcomplex. Contacts the 5S and 23S rRNAs.</text>
</comment>
<comment type="similarity">
    <text evidence="1">Belongs to the universal ribosomal protein uL18 family.</text>
</comment>